<protein>
    <recommendedName>
        <fullName evidence="1">Major capsid protein L1</fullName>
    </recommendedName>
</protein>
<accession>P03104</accession>
<evidence type="ECO:0000255" key="1">
    <source>
        <dbReference type="HAMAP-Rule" id="MF_04002"/>
    </source>
</evidence>
<feature type="chain" id="PRO_0000133557" description="Major capsid protein L1">
    <location>
        <begin position="1"/>
        <end position="513"/>
    </location>
</feature>
<feature type="disulfide bond" description="Interchain (with C-426)" evidence="1">
    <location>
        <position position="172"/>
    </location>
</feature>
<feature type="disulfide bond" description="Interchain (with C-172)" evidence="1">
    <location>
        <position position="426"/>
    </location>
</feature>
<organismHost>
    <name type="scientific">Odocoileus virginianus</name>
    <name type="common">White-tailed deer</name>
    <dbReference type="NCBI Taxonomy" id="9874"/>
</organismHost>
<comment type="function">
    <text evidence="1">Forms an icosahedral capsid with a T=7 symmetry and a 50 nm diameter. The capsid is composed of 72 pentamers linked to each other by disulfide bonds and associated with L2 proteins. Binds to heparan sulfate proteoglycans on cell surface of basal layer keratinocytes to provide initial virion attachment. This binding mediates a conformational change in the virus capsid that facilitates efficient infection. The virion enters the host cell via endocytosis. During virus trafficking, L1 protein dissociates from the viral DNA and the genomic DNA is released to the host nucleus. The virion assembly takes place within the cell nucleus. Encapsulates the genomic DNA together with protein L2.</text>
</comment>
<comment type="subunit">
    <text evidence="1">Self-assembles into homopentamers. The capsid has an icosahedral symmetry and consists of 72 capsomers, with each capsomer being a pentamer of L1. Interacts with the minor capsid protein L2; this interaction is necessary for viral genome encapsidation. Interacts with protein E2; this interaction enhances E2-dependent replication and transcription activation.</text>
</comment>
<comment type="subcellular location">
    <subcellularLocation>
        <location evidence="1">Virion</location>
    </subcellularLocation>
    <subcellularLocation>
        <location evidence="1">Host nucleus</location>
    </subcellularLocation>
</comment>
<comment type="similarity">
    <text evidence="1">Belongs to the papillomaviridae L1 protein family.</text>
</comment>
<reference key="1">
    <citation type="journal article" date="1985" name="J. Virol.">
        <title>Molecular cloning and nucleotide sequence of deer papillomavirus.</title>
        <authorList>
            <person name="Groff D.E."/>
            <person name="Lancaster W.D."/>
        </authorList>
    </citation>
    <scope>NUCLEOTIDE SEQUENCE [GENOMIC DNA]</scope>
</reference>
<dbReference type="EMBL" id="M11910">
    <property type="protein sequence ID" value="AAA66848.1"/>
    <property type="molecule type" value="Genomic_DNA"/>
</dbReference>
<dbReference type="PIR" id="A03645">
    <property type="entry name" value="P1WLDP"/>
</dbReference>
<dbReference type="RefSeq" id="NP_041300.1">
    <property type="nucleotide sequence ID" value="NC_001523.1"/>
</dbReference>
<dbReference type="SMR" id="P03104"/>
<dbReference type="GeneID" id="1488986"/>
<dbReference type="KEGG" id="vg:1488986"/>
<dbReference type="Proteomes" id="UP000009185">
    <property type="component" value="Segment"/>
</dbReference>
<dbReference type="GO" id="GO:0042025">
    <property type="term" value="C:host cell nucleus"/>
    <property type="evidence" value="ECO:0007669"/>
    <property type="project" value="UniProtKB-SubCell"/>
</dbReference>
<dbReference type="GO" id="GO:0039620">
    <property type="term" value="C:T=7 icosahedral viral capsid"/>
    <property type="evidence" value="ECO:0007669"/>
    <property type="project" value="UniProtKB-UniRule"/>
</dbReference>
<dbReference type="GO" id="GO:0005198">
    <property type="term" value="F:structural molecule activity"/>
    <property type="evidence" value="ECO:0007669"/>
    <property type="project" value="UniProtKB-UniRule"/>
</dbReference>
<dbReference type="GO" id="GO:0075509">
    <property type="term" value="P:endocytosis involved in viral entry into host cell"/>
    <property type="evidence" value="ECO:0007669"/>
    <property type="project" value="UniProtKB-KW"/>
</dbReference>
<dbReference type="GO" id="GO:0019062">
    <property type="term" value="P:virion attachment to host cell"/>
    <property type="evidence" value="ECO:0007669"/>
    <property type="project" value="UniProtKB-UniRule"/>
</dbReference>
<dbReference type="Gene3D" id="2.60.175.20">
    <property type="entry name" value="Major capsid L1 (late) superfamily, Papillomavirus"/>
    <property type="match status" value="1"/>
</dbReference>
<dbReference type="HAMAP" id="MF_04002">
    <property type="entry name" value="PPV_L1"/>
    <property type="match status" value="1"/>
</dbReference>
<dbReference type="InterPro" id="IPR002210">
    <property type="entry name" value="Capsid_L1_Papillomavir"/>
</dbReference>
<dbReference type="InterPro" id="IPR036973">
    <property type="entry name" value="Capsid_L1_sf_Papillomavir"/>
</dbReference>
<dbReference type="InterPro" id="IPR011222">
    <property type="entry name" value="dsDNA_vir_gr_I_capsid"/>
</dbReference>
<dbReference type="Pfam" id="PF00500">
    <property type="entry name" value="Late_protein_L1"/>
    <property type="match status" value="1"/>
</dbReference>
<dbReference type="PRINTS" id="PR00865">
    <property type="entry name" value="HPVCAPSIDL1"/>
</dbReference>
<dbReference type="SUPFAM" id="SSF88648">
    <property type="entry name" value="Group I dsDNA viruses"/>
    <property type="match status" value="1"/>
</dbReference>
<name>VL1_OVPVD</name>
<organism>
    <name type="scientific">Odocoileus virginianus papillomavirus 1</name>
    <name type="common">DPV</name>
    <name type="synonym">Deer papillomavirus</name>
    <dbReference type="NCBI Taxonomy" id="2772504"/>
    <lineage>
        <taxon>Viruses</taxon>
        <taxon>Monodnaviria</taxon>
        <taxon>Shotokuvirae</taxon>
        <taxon>Cossaviricota</taxon>
        <taxon>Papovaviricetes</taxon>
        <taxon>Zurhausenvirales</taxon>
        <taxon>Papillomaviridae</taxon>
        <taxon>Firstpapillomavirinae</taxon>
        <taxon>Deltapapillomavirus</taxon>
        <taxon>Deer papillomavirus</taxon>
    </lineage>
</organism>
<sequence>MAFWQPGQALYLPPTPVTKVLCSEQYINVRDIFYHGETERMLTSGSILSLEVTQKHTTVPKVSPNQYRVFRVALPDPNQFALPDKALHNPSKERLVWAVVGVQVSRGQPLGGEVRGHSYFNTFLDAENVSKKVTAQGTDDRKQAGMDTKQQQVLMLGCTPAIGEYWTKARPCVTDRPDAGSCPPIELKLSFIEDGDMMDIGFGAANFKELNATKSDLPLDIANSICLYPDYLKMTEEAAGNSMFFFARKEQVYVRHIWTPWGTDKELPPEAYYLKPPGEMELKMPSVFFASPSGSLVSTDGQLFNRPYWILRAQGMNNGVCWNNTLFVTVGDNTRGSTLTITVPNNDEPLTEYDTSKFNVYQRHVEEFKLAFILELCSVELTPETVSSLQGSMPSILENWEINLQPPTSSVLEDIYRFIDSPATKCADNVSPSKPEDPYSAHKFWEVNLKEKLSLDLDQFPLGRLVLQFDCRLDRLLPQKDHFTYPEKRYKRHMRITGTVRKVLLYICFSLNS</sequence>
<gene>
    <name evidence="1" type="primary">L1</name>
</gene>
<keyword id="KW-0167">Capsid protein</keyword>
<keyword id="KW-1015">Disulfide bond</keyword>
<keyword id="KW-1048">Host nucleus</keyword>
<keyword id="KW-0945">Host-virus interaction</keyword>
<keyword id="KW-0426">Late protein</keyword>
<keyword id="KW-1185">Reference proteome</keyword>
<keyword id="KW-1145">T=7 icosahedral capsid protein</keyword>
<keyword id="KW-1161">Viral attachment to host cell</keyword>
<keyword id="KW-1162">Viral penetration into host cytoplasm</keyword>
<keyword id="KW-0946">Virion</keyword>
<keyword id="KW-1164">Virus endocytosis by host</keyword>
<keyword id="KW-1160">Virus entry into host cell</keyword>
<proteinExistence type="inferred from homology"/>